<keyword id="KW-0012">Acyltransferase</keyword>
<keyword id="KW-0963">Cytoplasm</keyword>
<keyword id="KW-0408">Iron</keyword>
<keyword id="KW-0479">Metal-binding</keyword>
<keyword id="KW-0808">Transferase</keyword>
<keyword id="KW-0819">tRNA processing</keyword>
<name>TSAD_CALS8</name>
<feature type="chain" id="PRO_1000024424" description="tRNA N6-adenosine threonylcarbamoyltransferase">
    <location>
        <begin position="1"/>
        <end position="336"/>
    </location>
</feature>
<feature type="binding site" evidence="1">
    <location>
        <position position="111"/>
    </location>
    <ligand>
        <name>Fe cation</name>
        <dbReference type="ChEBI" id="CHEBI:24875"/>
    </ligand>
</feature>
<feature type="binding site" evidence="1">
    <location>
        <position position="115"/>
    </location>
    <ligand>
        <name>Fe cation</name>
        <dbReference type="ChEBI" id="CHEBI:24875"/>
    </ligand>
</feature>
<feature type="binding site" evidence="1">
    <location>
        <begin position="134"/>
        <end position="138"/>
    </location>
    <ligand>
        <name>substrate</name>
    </ligand>
</feature>
<feature type="binding site" evidence="1">
    <location>
        <position position="167"/>
    </location>
    <ligand>
        <name>substrate</name>
    </ligand>
</feature>
<feature type="binding site" evidence="1">
    <location>
        <position position="180"/>
    </location>
    <ligand>
        <name>substrate</name>
    </ligand>
</feature>
<feature type="binding site" evidence="1">
    <location>
        <position position="184"/>
    </location>
    <ligand>
        <name>substrate</name>
    </ligand>
</feature>
<feature type="binding site" evidence="1">
    <location>
        <position position="272"/>
    </location>
    <ligand>
        <name>substrate</name>
    </ligand>
</feature>
<feature type="binding site" evidence="1">
    <location>
        <position position="300"/>
    </location>
    <ligand>
        <name>Fe cation</name>
        <dbReference type="ChEBI" id="CHEBI:24875"/>
    </ligand>
</feature>
<sequence>MLVLGIETSCDETAAAIVKDGREVLSNIVYSQIEIHNQFGGVVPEIASRKHVEKISYVADMALKEADIDIDKIDAVAATYGPGLVGSLLVGLSFAKALSYARKIPFIAINHIEGHIYANFITYPKLKPPLIVLVVSGGHTNLIILEDFDRYEVVGKTRDDAAGEAFDKIARYLGLGYPGGPAIDKVARHGDEEKYKYPLADVEGYNFSFSGLKSAVINHVHTLNQRRENFKVEDVAASFQKAVVDTLVEKTIKLSLESNIKRVAIAGGVAANSKLREELSKRCSEHQIEFYVPDFKYCTDNAAMIASAGYFKLIKGQTSSYSTNAVPYISLVSKKE</sequence>
<comment type="function">
    <text evidence="1">Required for the formation of a threonylcarbamoyl group on adenosine at position 37 (t(6)A37) in tRNAs that read codons beginning with adenine. Is involved in the transfer of the threonylcarbamoyl moiety of threonylcarbamoyl-AMP (TC-AMP) to the N6 group of A37, together with TsaE and TsaB. TsaD likely plays a direct catalytic role in this reaction.</text>
</comment>
<comment type="catalytic activity">
    <reaction evidence="1">
        <text>L-threonylcarbamoyladenylate + adenosine(37) in tRNA = N(6)-L-threonylcarbamoyladenosine(37) in tRNA + AMP + H(+)</text>
        <dbReference type="Rhea" id="RHEA:37059"/>
        <dbReference type="Rhea" id="RHEA-COMP:10162"/>
        <dbReference type="Rhea" id="RHEA-COMP:10163"/>
        <dbReference type="ChEBI" id="CHEBI:15378"/>
        <dbReference type="ChEBI" id="CHEBI:73682"/>
        <dbReference type="ChEBI" id="CHEBI:74411"/>
        <dbReference type="ChEBI" id="CHEBI:74418"/>
        <dbReference type="ChEBI" id="CHEBI:456215"/>
        <dbReference type="EC" id="2.3.1.234"/>
    </reaction>
</comment>
<comment type="cofactor">
    <cofactor evidence="1">
        <name>Fe(2+)</name>
        <dbReference type="ChEBI" id="CHEBI:29033"/>
    </cofactor>
    <text evidence="1">Binds 1 Fe(2+) ion per subunit.</text>
</comment>
<comment type="subcellular location">
    <subcellularLocation>
        <location evidence="1">Cytoplasm</location>
    </subcellularLocation>
</comment>
<comment type="similarity">
    <text evidence="1">Belongs to the KAE1 / TsaD family.</text>
</comment>
<dbReference type="EC" id="2.3.1.234" evidence="1"/>
<dbReference type="EMBL" id="CP000679">
    <property type="protein sequence ID" value="ABP67953.1"/>
    <property type="molecule type" value="Genomic_DNA"/>
</dbReference>
<dbReference type="RefSeq" id="WP_011917879.1">
    <property type="nucleotide sequence ID" value="NC_009437.1"/>
</dbReference>
<dbReference type="SMR" id="A4XM18"/>
<dbReference type="STRING" id="351627.Csac_2375"/>
<dbReference type="KEGG" id="csc:Csac_2375"/>
<dbReference type="eggNOG" id="COG0533">
    <property type="taxonomic scope" value="Bacteria"/>
</dbReference>
<dbReference type="HOGENOM" id="CLU_023208_0_2_9"/>
<dbReference type="OrthoDB" id="9806197at2"/>
<dbReference type="Proteomes" id="UP000000256">
    <property type="component" value="Chromosome"/>
</dbReference>
<dbReference type="GO" id="GO:0005737">
    <property type="term" value="C:cytoplasm"/>
    <property type="evidence" value="ECO:0007669"/>
    <property type="project" value="UniProtKB-SubCell"/>
</dbReference>
<dbReference type="GO" id="GO:0005506">
    <property type="term" value="F:iron ion binding"/>
    <property type="evidence" value="ECO:0007669"/>
    <property type="project" value="UniProtKB-UniRule"/>
</dbReference>
<dbReference type="GO" id="GO:0061711">
    <property type="term" value="F:N(6)-L-threonylcarbamoyladenine synthase activity"/>
    <property type="evidence" value="ECO:0007669"/>
    <property type="project" value="UniProtKB-EC"/>
</dbReference>
<dbReference type="GO" id="GO:0002949">
    <property type="term" value="P:tRNA threonylcarbamoyladenosine modification"/>
    <property type="evidence" value="ECO:0007669"/>
    <property type="project" value="UniProtKB-UniRule"/>
</dbReference>
<dbReference type="CDD" id="cd24133">
    <property type="entry name" value="ASKHA_NBD_TsaD_bac"/>
    <property type="match status" value="1"/>
</dbReference>
<dbReference type="FunFam" id="3.30.420.40:FF:000012">
    <property type="entry name" value="tRNA N6-adenosine threonylcarbamoyltransferase"/>
    <property type="match status" value="1"/>
</dbReference>
<dbReference type="FunFam" id="3.30.420.40:FF:000040">
    <property type="entry name" value="tRNA N6-adenosine threonylcarbamoyltransferase"/>
    <property type="match status" value="1"/>
</dbReference>
<dbReference type="Gene3D" id="3.30.420.40">
    <property type="match status" value="2"/>
</dbReference>
<dbReference type="HAMAP" id="MF_01445">
    <property type="entry name" value="TsaD"/>
    <property type="match status" value="1"/>
</dbReference>
<dbReference type="InterPro" id="IPR043129">
    <property type="entry name" value="ATPase_NBD"/>
</dbReference>
<dbReference type="InterPro" id="IPR000905">
    <property type="entry name" value="Gcp-like_dom"/>
</dbReference>
<dbReference type="InterPro" id="IPR017861">
    <property type="entry name" value="KAE1/TsaD"/>
</dbReference>
<dbReference type="InterPro" id="IPR022450">
    <property type="entry name" value="TsaD"/>
</dbReference>
<dbReference type="NCBIfam" id="TIGR00329">
    <property type="entry name" value="gcp_kae1"/>
    <property type="match status" value="1"/>
</dbReference>
<dbReference type="NCBIfam" id="TIGR03723">
    <property type="entry name" value="T6A_TsaD_YgjD"/>
    <property type="match status" value="1"/>
</dbReference>
<dbReference type="PANTHER" id="PTHR11735">
    <property type="entry name" value="TRNA N6-ADENOSINE THREONYLCARBAMOYLTRANSFERASE"/>
    <property type="match status" value="1"/>
</dbReference>
<dbReference type="PANTHER" id="PTHR11735:SF6">
    <property type="entry name" value="TRNA N6-ADENOSINE THREONYLCARBAMOYLTRANSFERASE, MITOCHONDRIAL"/>
    <property type="match status" value="1"/>
</dbReference>
<dbReference type="Pfam" id="PF00814">
    <property type="entry name" value="TsaD"/>
    <property type="match status" value="1"/>
</dbReference>
<dbReference type="PRINTS" id="PR00789">
    <property type="entry name" value="OSIALOPTASE"/>
</dbReference>
<dbReference type="SUPFAM" id="SSF53067">
    <property type="entry name" value="Actin-like ATPase domain"/>
    <property type="match status" value="2"/>
</dbReference>
<accession>A4XM18</accession>
<protein>
    <recommendedName>
        <fullName evidence="1">tRNA N6-adenosine threonylcarbamoyltransferase</fullName>
        <ecNumber evidence="1">2.3.1.234</ecNumber>
    </recommendedName>
    <alternativeName>
        <fullName evidence="1">N6-L-threonylcarbamoyladenine synthase</fullName>
        <shortName evidence="1">t(6)A synthase</shortName>
    </alternativeName>
    <alternativeName>
        <fullName evidence="1">t(6)A37 threonylcarbamoyladenosine biosynthesis protein TsaD</fullName>
    </alternativeName>
    <alternativeName>
        <fullName evidence="1">tRNA threonylcarbamoyladenosine biosynthesis protein TsaD</fullName>
    </alternativeName>
</protein>
<proteinExistence type="inferred from homology"/>
<gene>
    <name evidence="1" type="primary">tsaD</name>
    <name type="synonym">gcp</name>
    <name type="ordered locus">Csac_2375</name>
</gene>
<evidence type="ECO:0000255" key="1">
    <source>
        <dbReference type="HAMAP-Rule" id="MF_01445"/>
    </source>
</evidence>
<organism>
    <name type="scientific">Caldicellulosiruptor saccharolyticus (strain ATCC 43494 / DSM 8903 / Tp8T 6331)</name>
    <dbReference type="NCBI Taxonomy" id="351627"/>
    <lineage>
        <taxon>Bacteria</taxon>
        <taxon>Bacillati</taxon>
        <taxon>Bacillota</taxon>
        <taxon>Bacillota incertae sedis</taxon>
        <taxon>Caldicellulosiruptorales</taxon>
        <taxon>Caldicellulosiruptoraceae</taxon>
        <taxon>Caldicellulosiruptor</taxon>
    </lineage>
</organism>
<reference key="1">
    <citation type="submission" date="2007-04" db="EMBL/GenBank/DDBJ databases">
        <title>Genome sequence of the thermophilic hydrogen-producing bacterium Caldicellulosiruptor saccharolyticus DSM 8903.</title>
        <authorList>
            <person name="Copeland A."/>
            <person name="Lucas S."/>
            <person name="Lapidus A."/>
            <person name="Barry K."/>
            <person name="Detter J.C."/>
            <person name="Glavina del Rio T."/>
            <person name="Hammon N."/>
            <person name="Israni S."/>
            <person name="Dalin E."/>
            <person name="Tice H."/>
            <person name="Pitluck S."/>
            <person name="Kiss H."/>
            <person name="Brettin T."/>
            <person name="Bruce D."/>
            <person name="Han C."/>
            <person name="Schmutz J."/>
            <person name="Larimer F."/>
            <person name="Land M."/>
            <person name="Hauser L."/>
            <person name="Kyrpides N."/>
            <person name="Lykidis A."/>
            <person name="van de Werken H.J.G."/>
            <person name="Verhaart M.R.A."/>
            <person name="VanFossen A.L."/>
            <person name="Lewis D.L."/>
            <person name="Nichols J.D."/>
            <person name="Goorissen H.P."/>
            <person name="van Niel E.W.J."/>
            <person name="Stams F.J.M."/>
            <person name="Willquist K.U."/>
            <person name="Ward D.E."/>
            <person name="van der Oost J."/>
            <person name="Kelly R.M."/>
            <person name="Kengen S.M.W."/>
            <person name="Richardson P."/>
        </authorList>
    </citation>
    <scope>NUCLEOTIDE SEQUENCE [LARGE SCALE GENOMIC DNA]</scope>
    <source>
        <strain>ATCC 43494 / DSM 8903 / Tp8T 6331</strain>
    </source>
</reference>